<reference key="1">
    <citation type="journal article" date="1992" name="Plant Sci.">
        <title>Cloning and characterization of an apple (Malus domesticua (L) Borkh) calmodulin gene.</title>
        <authorList>
            <person name="Watillon B."/>
            <person name="Kettmann R."/>
            <person name="Boxus P."/>
            <person name="Burny A."/>
        </authorList>
    </citation>
    <scope>NUCLEOTIDE SEQUENCE [GENOMIC DNA]</scope>
    <source>
        <strain>cv. McIntosh\Wijcik</strain>
    </source>
</reference>
<accession>P48976</accession>
<feature type="initiator methionine" description="Removed" evidence="1">
    <location>
        <position position="1"/>
    </location>
</feature>
<feature type="chain" id="PRO_0000198295" description="Calmodulin">
    <location>
        <begin position="2"/>
        <end position="149"/>
    </location>
</feature>
<feature type="domain" description="EF-hand 1" evidence="2">
    <location>
        <begin position="8"/>
        <end position="43"/>
    </location>
</feature>
<feature type="domain" description="EF-hand 2" evidence="2">
    <location>
        <begin position="44"/>
        <end position="79"/>
    </location>
</feature>
<feature type="domain" description="EF-hand 3" evidence="2">
    <location>
        <begin position="81"/>
        <end position="116"/>
    </location>
</feature>
<feature type="domain" description="EF-hand 4" evidence="2">
    <location>
        <begin position="117"/>
        <end position="149"/>
    </location>
</feature>
<feature type="binding site" evidence="2">
    <location>
        <position position="21"/>
    </location>
    <ligand>
        <name>Ca(2+)</name>
        <dbReference type="ChEBI" id="CHEBI:29108"/>
        <label>1</label>
    </ligand>
</feature>
<feature type="binding site" evidence="2">
    <location>
        <position position="23"/>
    </location>
    <ligand>
        <name>Ca(2+)</name>
        <dbReference type="ChEBI" id="CHEBI:29108"/>
        <label>1</label>
    </ligand>
</feature>
<feature type="binding site" evidence="2">
    <location>
        <position position="25"/>
    </location>
    <ligand>
        <name>Ca(2+)</name>
        <dbReference type="ChEBI" id="CHEBI:29108"/>
        <label>1</label>
    </ligand>
</feature>
<feature type="binding site" evidence="2">
    <location>
        <position position="27"/>
    </location>
    <ligand>
        <name>Ca(2+)</name>
        <dbReference type="ChEBI" id="CHEBI:29108"/>
        <label>1</label>
    </ligand>
</feature>
<feature type="binding site" evidence="2">
    <location>
        <position position="32"/>
    </location>
    <ligand>
        <name>Ca(2+)</name>
        <dbReference type="ChEBI" id="CHEBI:29108"/>
        <label>1</label>
    </ligand>
</feature>
<feature type="binding site" evidence="3">
    <location>
        <position position="57"/>
    </location>
    <ligand>
        <name>Ca(2+)</name>
        <dbReference type="ChEBI" id="CHEBI:29108"/>
        <label>2</label>
    </ligand>
</feature>
<feature type="binding site" evidence="3">
    <location>
        <position position="59"/>
    </location>
    <ligand>
        <name>Ca(2+)</name>
        <dbReference type="ChEBI" id="CHEBI:29108"/>
        <label>2</label>
    </ligand>
</feature>
<feature type="binding site" evidence="3">
    <location>
        <position position="61"/>
    </location>
    <ligand>
        <name>Ca(2+)</name>
        <dbReference type="ChEBI" id="CHEBI:29108"/>
        <label>2</label>
    </ligand>
</feature>
<feature type="binding site" evidence="3">
    <location>
        <position position="63"/>
    </location>
    <ligand>
        <name>Ca(2+)</name>
        <dbReference type="ChEBI" id="CHEBI:29108"/>
        <label>2</label>
    </ligand>
</feature>
<feature type="binding site" evidence="3">
    <location>
        <position position="68"/>
    </location>
    <ligand>
        <name>Ca(2+)</name>
        <dbReference type="ChEBI" id="CHEBI:29108"/>
        <label>2</label>
    </ligand>
</feature>
<feature type="binding site" evidence="2">
    <location>
        <position position="94"/>
    </location>
    <ligand>
        <name>Ca(2+)</name>
        <dbReference type="ChEBI" id="CHEBI:29108"/>
        <label>3</label>
    </ligand>
</feature>
<feature type="binding site" evidence="2">
    <location>
        <position position="96"/>
    </location>
    <ligand>
        <name>Ca(2+)</name>
        <dbReference type="ChEBI" id="CHEBI:29108"/>
        <label>3</label>
    </ligand>
</feature>
<feature type="binding site" evidence="2">
    <location>
        <position position="98"/>
    </location>
    <ligand>
        <name>Ca(2+)</name>
        <dbReference type="ChEBI" id="CHEBI:29108"/>
        <label>3</label>
    </ligand>
</feature>
<feature type="binding site" evidence="2">
    <location>
        <position position="105"/>
    </location>
    <ligand>
        <name>Ca(2+)</name>
        <dbReference type="ChEBI" id="CHEBI:29108"/>
        <label>3</label>
    </ligand>
</feature>
<feature type="binding site" evidence="2">
    <location>
        <position position="130"/>
    </location>
    <ligand>
        <name>Ca(2+)</name>
        <dbReference type="ChEBI" id="CHEBI:29108"/>
        <label>4</label>
    </ligand>
</feature>
<feature type="binding site" evidence="2">
    <location>
        <position position="132"/>
    </location>
    <ligand>
        <name>Ca(2+)</name>
        <dbReference type="ChEBI" id="CHEBI:29108"/>
        <label>4</label>
    </ligand>
</feature>
<feature type="binding site" evidence="2">
    <location>
        <position position="134"/>
    </location>
    <ligand>
        <name>Ca(2+)</name>
        <dbReference type="ChEBI" id="CHEBI:29108"/>
        <label>4</label>
    </ligand>
</feature>
<feature type="binding site" evidence="2">
    <location>
        <position position="136"/>
    </location>
    <ligand>
        <name>Ca(2+)</name>
        <dbReference type="ChEBI" id="CHEBI:29108"/>
        <label>4</label>
    </ligand>
</feature>
<feature type="binding site" evidence="2">
    <location>
        <position position="141"/>
    </location>
    <ligand>
        <name>Ca(2+)</name>
        <dbReference type="ChEBI" id="CHEBI:29108"/>
        <label>4</label>
    </ligand>
</feature>
<feature type="modified residue" description="N-acetylalanine" evidence="1">
    <location>
        <position position="2"/>
    </location>
</feature>
<feature type="modified residue" description="N6,N6,N6-trimethyllysine" evidence="1">
    <location>
        <position position="116"/>
    </location>
</feature>
<evidence type="ECO:0000250" key="1"/>
<evidence type="ECO:0000255" key="2">
    <source>
        <dbReference type="PROSITE-ProRule" id="PRU00448"/>
    </source>
</evidence>
<evidence type="ECO:0000305" key="3"/>
<organism>
    <name type="scientific">Malus domestica</name>
    <name type="common">Apple</name>
    <name type="synonym">Pyrus malus</name>
    <dbReference type="NCBI Taxonomy" id="3750"/>
    <lineage>
        <taxon>Eukaryota</taxon>
        <taxon>Viridiplantae</taxon>
        <taxon>Streptophyta</taxon>
        <taxon>Embryophyta</taxon>
        <taxon>Tracheophyta</taxon>
        <taxon>Spermatophyta</taxon>
        <taxon>Magnoliopsida</taxon>
        <taxon>eudicotyledons</taxon>
        <taxon>Gunneridae</taxon>
        <taxon>Pentapetalae</taxon>
        <taxon>rosids</taxon>
        <taxon>fabids</taxon>
        <taxon>Rosales</taxon>
        <taxon>Rosaceae</taxon>
        <taxon>Amygdaloideae</taxon>
        <taxon>Maleae</taxon>
        <taxon>Malus</taxon>
    </lineage>
</organism>
<name>CALM_MALDO</name>
<sequence>MADQLTDDQISEFKEAFSLFDKDGDGCITTKELGTVMRSLGQNPTEAELQDMINEVDADGNGTIDFPEPLNLMARKMKDTDSEEELKEAFRVFDKDQNGFISAAELRHVMTNLGEKLTDEEVDEMIREADVDGDGQINYEEFVKVMMAK</sequence>
<gene>
    <name type="primary">CAM</name>
</gene>
<protein>
    <recommendedName>
        <fullName>Calmodulin</fullName>
        <shortName>CaM</shortName>
    </recommendedName>
</protein>
<comment type="function">
    <text>Calmodulin mediates the control of a large number of enzymes, ion channels and other proteins by Ca(2+). Among the enzymes to be stimulated by the calmodulin-Ca(2+) complex are a number of protein kinases and phosphatases.</text>
</comment>
<comment type="miscellaneous">
    <text>This protein has four functional calcium-binding sites.</text>
</comment>
<comment type="similarity">
    <text evidence="3">Belongs to the calmodulin family.</text>
</comment>
<dbReference type="EMBL" id="X60737">
    <property type="protein sequence ID" value="CAA43142.1"/>
    <property type="molecule type" value="Genomic_DNA"/>
</dbReference>
<dbReference type="SMR" id="P48976"/>
<dbReference type="GO" id="GO:0016460">
    <property type="term" value="C:myosin II complex"/>
    <property type="evidence" value="ECO:0007669"/>
    <property type="project" value="TreeGrafter"/>
</dbReference>
<dbReference type="GO" id="GO:0005509">
    <property type="term" value="F:calcium ion binding"/>
    <property type="evidence" value="ECO:0007669"/>
    <property type="project" value="InterPro"/>
</dbReference>
<dbReference type="CDD" id="cd00051">
    <property type="entry name" value="EFh"/>
    <property type="match status" value="2"/>
</dbReference>
<dbReference type="FunFam" id="1.10.238.10:FF:000034">
    <property type="entry name" value="Calmodulin"/>
    <property type="match status" value="1"/>
</dbReference>
<dbReference type="FunFam" id="1.10.238.10:FF:000042">
    <property type="entry name" value="Calmodulin"/>
    <property type="match status" value="1"/>
</dbReference>
<dbReference type="Gene3D" id="1.10.238.10">
    <property type="entry name" value="EF-hand"/>
    <property type="match status" value="3"/>
</dbReference>
<dbReference type="InterPro" id="IPR050230">
    <property type="entry name" value="CALM/Myosin/TropC-like"/>
</dbReference>
<dbReference type="InterPro" id="IPR011992">
    <property type="entry name" value="EF-hand-dom_pair"/>
</dbReference>
<dbReference type="InterPro" id="IPR018247">
    <property type="entry name" value="EF_Hand_1_Ca_BS"/>
</dbReference>
<dbReference type="InterPro" id="IPR002048">
    <property type="entry name" value="EF_hand_dom"/>
</dbReference>
<dbReference type="PANTHER" id="PTHR23048:SF53">
    <property type="entry name" value="CALMODULIN"/>
    <property type="match status" value="1"/>
</dbReference>
<dbReference type="PANTHER" id="PTHR23048">
    <property type="entry name" value="MYOSIN LIGHT CHAIN 1, 3"/>
    <property type="match status" value="1"/>
</dbReference>
<dbReference type="Pfam" id="PF13499">
    <property type="entry name" value="EF-hand_7"/>
    <property type="match status" value="2"/>
</dbReference>
<dbReference type="SMART" id="SM00054">
    <property type="entry name" value="EFh"/>
    <property type="match status" value="4"/>
</dbReference>
<dbReference type="SUPFAM" id="SSF47473">
    <property type="entry name" value="EF-hand"/>
    <property type="match status" value="1"/>
</dbReference>
<dbReference type="PROSITE" id="PS00018">
    <property type="entry name" value="EF_HAND_1"/>
    <property type="match status" value="3"/>
</dbReference>
<dbReference type="PROSITE" id="PS50222">
    <property type="entry name" value="EF_HAND_2"/>
    <property type="match status" value="4"/>
</dbReference>
<keyword id="KW-0007">Acetylation</keyword>
<keyword id="KW-0106">Calcium</keyword>
<keyword id="KW-0479">Metal-binding</keyword>
<keyword id="KW-0488">Methylation</keyword>
<keyword id="KW-0677">Repeat</keyword>
<proteinExistence type="inferred from homology"/>